<feature type="chain" id="PRO_0000449820" description="GDP-mannose:di-myo-inositol-1,3'-phosphate beta-1,2-mannosyltransferase">
    <location>
        <begin position="1"/>
        <end position="356"/>
    </location>
</feature>
<name>MDS_AQUAE</name>
<evidence type="ECO:0000250" key="1">
    <source>
        <dbReference type="UniProtKB" id="Q9WYJ4"/>
    </source>
</evidence>
<evidence type="ECO:0000269" key="2">
    <source>
    </source>
</evidence>
<evidence type="ECO:0000303" key="3">
    <source>
    </source>
</evidence>
<evidence type="ECO:0000305" key="4"/>
<evidence type="ECO:0000312" key="5">
    <source>
        <dbReference type="EMBL" id="AAC07179.1"/>
    </source>
</evidence>
<sequence length="356" mass="41994">MNVGIFSRWNATCGVSLHAEMIGRELLRRGYPITVFAPYLESASRWWHHKLIRPDEEYVVRCYEELSPDGKEGKIDIEKVLEREIDFLIVESYEKLPYKDVEKLVKILKDKGIPSIAIIHEGDYEDIRYTDMNIFEKVCVFDERYVKEVLKDRVSEEKVEIIPYPCYPVREGSREFAEDGVIKFFSFGRQPKEEYCPYIEGLKVFKRDFPNVKYRIVRAMEPLKIFEDFVEQEERILDYEEIVKELHSADFHLLPKGNTKRVVVSSTLYQVLGTLTLTVVPDNRFFETLPHGEEAPVIFYRDVLELVKELKKASADEEYRKKIRENASKFVEENSVERITDRFENLINSILVKNVH</sequence>
<reference key="1">
    <citation type="journal article" date="1998" name="Nature">
        <title>The complete genome of the hyperthermophilic bacterium Aquifex aeolicus.</title>
        <authorList>
            <person name="Deckert G."/>
            <person name="Warren P.V."/>
            <person name="Gaasterland T."/>
            <person name="Young W.G."/>
            <person name="Lenox A.L."/>
            <person name="Graham D.E."/>
            <person name="Overbeek R."/>
            <person name="Snead M.A."/>
            <person name="Keller M."/>
            <person name="Aujay M."/>
            <person name="Huber R."/>
            <person name="Feldman R.A."/>
            <person name="Short J.M."/>
            <person name="Olsen G.J."/>
            <person name="Swanson R.V."/>
        </authorList>
    </citation>
    <scope>NUCLEOTIDE SEQUENCE [LARGE SCALE GENOMIC DNA]</scope>
    <source>
        <strain>VF5</strain>
    </source>
</reference>
<reference key="2">
    <citation type="journal article" date="2009" name="J. Bacteriol.">
        <title>A unique beta-1,2-mannosyltransferase of Thermotoga maritima that uses di-myo-inositol phosphate as the mannosyl acceptor.</title>
        <authorList>
            <person name="Rodrigues M.V."/>
            <person name="Borges N."/>
            <person name="Almeida C.P."/>
            <person name="Lamosa P."/>
            <person name="Santos H."/>
        </authorList>
    </citation>
    <scope>FUNCTION</scope>
    <scope>CATALYTIC ACTIVITY</scope>
    <source>
        <strain>VF5</strain>
    </source>
</reference>
<organism>
    <name type="scientific">Aquifex aeolicus (strain VF5)</name>
    <dbReference type="NCBI Taxonomy" id="224324"/>
    <lineage>
        <taxon>Bacteria</taxon>
        <taxon>Pseudomonadati</taxon>
        <taxon>Aquificota</taxon>
        <taxon>Aquificia</taxon>
        <taxon>Aquificales</taxon>
        <taxon>Aquificaceae</taxon>
        <taxon>Aquifex</taxon>
    </lineage>
</organism>
<dbReference type="EC" id="2.4.1.361" evidence="1"/>
<dbReference type="EMBL" id="AE000657">
    <property type="protein sequence ID" value="AAC07179.1"/>
    <property type="molecule type" value="Genomic_DNA"/>
</dbReference>
<dbReference type="PIR" id="C70398">
    <property type="entry name" value="C70398"/>
</dbReference>
<dbReference type="RefSeq" id="NP_213778.1">
    <property type="nucleotide sequence ID" value="NC_000918.1"/>
</dbReference>
<dbReference type="RefSeq" id="WP_010880716.1">
    <property type="nucleotide sequence ID" value="NC_000918.1"/>
</dbReference>
<dbReference type="SMR" id="O67214"/>
<dbReference type="STRING" id="224324.aq_1141"/>
<dbReference type="EnsemblBacteria" id="AAC07179">
    <property type="protein sequence ID" value="AAC07179"/>
    <property type="gene ID" value="aq_1141"/>
</dbReference>
<dbReference type="KEGG" id="aae:aq_1141"/>
<dbReference type="PATRIC" id="fig|224324.8.peg.889"/>
<dbReference type="eggNOG" id="COG0438">
    <property type="taxonomic scope" value="Bacteria"/>
</dbReference>
<dbReference type="HOGENOM" id="CLU_778299_0_0_0"/>
<dbReference type="InParanoid" id="O67214"/>
<dbReference type="OrthoDB" id="36573at2"/>
<dbReference type="Proteomes" id="UP000000798">
    <property type="component" value="Chromosome"/>
</dbReference>
<dbReference type="GO" id="GO:0016757">
    <property type="term" value="F:glycosyltransferase activity"/>
    <property type="evidence" value="ECO:0007669"/>
    <property type="project" value="UniProtKB-KW"/>
</dbReference>
<dbReference type="SUPFAM" id="SSF53756">
    <property type="entry name" value="UDP-Glycosyltransferase/glycogen phosphorylase"/>
    <property type="match status" value="1"/>
</dbReference>
<accession>O67214</accession>
<gene>
    <name evidence="3" type="primary">mds</name>
    <name evidence="5" type="ordered locus">aq_1141</name>
</gene>
<comment type="function">
    <text evidence="1 2">Catalyzes the transfer of the mannosyl group from GDP-mannose to di-myo-inositol-1,3'-phosphate (DIP), producing mannosyl-di-myo-inositol phosphate (MDIP) (PubMed:19648237). Can also use MDIP as an acceptor of a second mannose residue, yielding di-mannosyl-di-myo-inositol phosphate (MMDIP) (By similarity).</text>
</comment>
<comment type="catalytic activity">
    <reaction evidence="2">
        <text>bis(myo-inositol) 1,3'-phosphate + GDP-alpha-D-mannose = 2-O-(beta-D-mannosyl)-bis(myo-inositol) 1,3'-phosphate + GDP + H(+)</text>
        <dbReference type="Rhea" id="RHEA:59080"/>
        <dbReference type="ChEBI" id="CHEBI:15378"/>
        <dbReference type="ChEBI" id="CHEBI:57527"/>
        <dbReference type="ChEBI" id="CHEBI:58189"/>
        <dbReference type="ChEBI" id="CHEBI:142886"/>
        <dbReference type="ChEBI" id="CHEBI:142888"/>
    </reaction>
</comment>
<comment type="catalytic activity">
    <reaction evidence="1">
        <text>2-O-(beta-D-mannosyl)-bis(myo-inositol) 1,3'-phosphate + GDP-alpha-D-mannose = 2-O-(beta-D-mannosyl-(1-&gt;2)-beta-D-mannosyl)-bis(myo-inositol) 1,3'-phosphate + GDP + H(+)</text>
        <dbReference type="Rhea" id="RHEA:59084"/>
        <dbReference type="ChEBI" id="CHEBI:15378"/>
        <dbReference type="ChEBI" id="CHEBI:57527"/>
        <dbReference type="ChEBI" id="CHEBI:58189"/>
        <dbReference type="ChEBI" id="CHEBI:142887"/>
        <dbReference type="ChEBI" id="CHEBI:142888"/>
    </reaction>
</comment>
<comment type="catalytic activity">
    <reaction evidence="1">
        <text>bis(myo-inositol) 1,3'-phosphate + 2 GDP-alpha-D-mannose = 2-O-(beta-D-mannosyl-(1-&gt;2)-beta-D-mannosyl)-bis(myo-inositol) 1,3'-phosphate + 2 GDP + 2 H(+)</text>
        <dbReference type="Rhea" id="RHEA:59076"/>
        <dbReference type="ChEBI" id="CHEBI:15378"/>
        <dbReference type="ChEBI" id="CHEBI:57527"/>
        <dbReference type="ChEBI" id="CHEBI:58189"/>
        <dbReference type="ChEBI" id="CHEBI:142886"/>
        <dbReference type="ChEBI" id="CHEBI:142887"/>
        <dbReference type="EC" id="2.4.1.361"/>
    </reaction>
</comment>
<comment type="cofactor">
    <cofactor evidence="1">
        <name>Mg(2+)</name>
        <dbReference type="ChEBI" id="CHEBI:18420"/>
    </cofactor>
</comment>
<comment type="similarity">
    <text evidence="4">Belongs to the MDIP synthase family.</text>
</comment>
<proteinExistence type="evidence at protein level"/>
<keyword id="KW-0328">Glycosyltransferase</keyword>
<keyword id="KW-0460">Magnesium</keyword>
<keyword id="KW-1185">Reference proteome</keyword>
<keyword id="KW-0808">Transferase</keyword>
<protein>
    <recommendedName>
        <fullName evidence="4">GDP-mannose:di-myo-inositol-1,3'-phosphate beta-1,2-mannosyltransferase</fullName>
        <ecNumber evidence="1">2.4.1.361</ecNumber>
    </recommendedName>
    <alternativeName>
        <fullName evidence="3">MDIP synthase</fullName>
    </alternativeName>
</protein>